<evidence type="ECO:0000255" key="1">
    <source>
        <dbReference type="HAMAP-Rule" id="MF_01523"/>
    </source>
</evidence>
<protein>
    <recommendedName>
        <fullName evidence="1">Ribosomal RNA small subunit methyltransferase J</fullName>
        <ecNumber evidence="1">2.1.1.242</ecNumber>
    </recommendedName>
    <alternativeName>
        <fullName evidence="1">16S rRNA m2G1516 methyltransferase</fullName>
    </alternativeName>
    <alternativeName>
        <fullName evidence="1">rRNA (guanine-N(2)-)-methyltransferase</fullName>
    </alternativeName>
</protein>
<gene>
    <name evidence="1" type="primary">rsmJ</name>
    <name type="ordered locus">NGO_1261</name>
</gene>
<organism>
    <name type="scientific">Neisseria gonorrhoeae (strain ATCC 700825 / FA 1090)</name>
    <dbReference type="NCBI Taxonomy" id="242231"/>
    <lineage>
        <taxon>Bacteria</taxon>
        <taxon>Pseudomonadati</taxon>
        <taxon>Pseudomonadota</taxon>
        <taxon>Betaproteobacteria</taxon>
        <taxon>Neisseriales</taxon>
        <taxon>Neisseriaceae</taxon>
        <taxon>Neisseria</taxon>
    </lineage>
</organism>
<comment type="function">
    <text evidence="1">Specifically methylates the guanosine in position 1516 of 16S rRNA.</text>
</comment>
<comment type="catalytic activity">
    <reaction evidence="1">
        <text>guanosine(1516) in 16S rRNA + S-adenosyl-L-methionine = N(2)-methylguanosine(1516) in 16S rRNA + S-adenosyl-L-homocysteine + H(+)</text>
        <dbReference type="Rhea" id="RHEA:43220"/>
        <dbReference type="Rhea" id="RHEA-COMP:10412"/>
        <dbReference type="Rhea" id="RHEA-COMP:10413"/>
        <dbReference type="ChEBI" id="CHEBI:15378"/>
        <dbReference type="ChEBI" id="CHEBI:57856"/>
        <dbReference type="ChEBI" id="CHEBI:59789"/>
        <dbReference type="ChEBI" id="CHEBI:74269"/>
        <dbReference type="ChEBI" id="CHEBI:74481"/>
        <dbReference type="EC" id="2.1.1.242"/>
    </reaction>
</comment>
<comment type="subcellular location">
    <subcellularLocation>
        <location evidence="1">Cytoplasm</location>
    </subcellularLocation>
</comment>
<comment type="similarity">
    <text evidence="1">Belongs to the methyltransferase superfamily. RsmJ family.</text>
</comment>
<keyword id="KW-0963">Cytoplasm</keyword>
<keyword id="KW-0489">Methyltransferase</keyword>
<keyword id="KW-1185">Reference proteome</keyword>
<keyword id="KW-0698">rRNA processing</keyword>
<keyword id="KW-0949">S-adenosyl-L-methionine</keyword>
<keyword id="KW-0808">Transferase</keyword>
<name>RSMJ_NEIG1</name>
<accession>Q5F7B7</accession>
<sequence>MTDILIDDTATEAVRTLIRAFPLVPVSQPPEQGSYLLAEHDTVSLRLVGEKSNVIVDFTSGAAQYRRTKGGGELIAKAVNHTAHPTVWDATAGLGRDSFVLASLGLTVTAFEQHPAVACLLSDGIRRALLNPETQDTAARINLHFGNAAEQMPALVKTQGKPDIVYLDPMYPERRKSAAVKKEMAYFHRLVGEAQDEVVLLHTARQTAKKRVVVKRPRLGEHLAGQAPAYQYTGKSTRFDVYLPYGADKG</sequence>
<dbReference type="EC" id="2.1.1.242" evidence="1"/>
<dbReference type="EMBL" id="AE004969">
    <property type="protein sequence ID" value="AAW89920.1"/>
    <property type="molecule type" value="Genomic_DNA"/>
</dbReference>
<dbReference type="RefSeq" id="WP_003689730.1">
    <property type="nucleotide sequence ID" value="NC_002946.2"/>
</dbReference>
<dbReference type="RefSeq" id="YP_208332.1">
    <property type="nucleotide sequence ID" value="NC_002946.2"/>
</dbReference>
<dbReference type="SMR" id="Q5F7B7"/>
<dbReference type="STRING" id="242231.NGO_1261"/>
<dbReference type="KEGG" id="ngo:NGO_1261"/>
<dbReference type="PATRIC" id="fig|242231.10.peg.1481"/>
<dbReference type="HOGENOM" id="CLU_076324_1_0_4"/>
<dbReference type="Proteomes" id="UP000000535">
    <property type="component" value="Chromosome"/>
</dbReference>
<dbReference type="GO" id="GO:0005737">
    <property type="term" value="C:cytoplasm"/>
    <property type="evidence" value="ECO:0007669"/>
    <property type="project" value="UniProtKB-SubCell"/>
</dbReference>
<dbReference type="GO" id="GO:0008990">
    <property type="term" value="F:rRNA (guanine-N2-)-methyltransferase activity"/>
    <property type="evidence" value="ECO:0007669"/>
    <property type="project" value="UniProtKB-UniRule"/>
</dbReference>
<dbReference type="Gene3D" id="3.40.50.150">
    <property type="entry name" value="Vaccinia Virus protein VP39"/>
    <property type="match status" value="1"/>
</dbReference>
<dbReference type="Gene3D" id="3.40.1630.10">
    <property type="entry name" value="YhiQ-like domain"/>
    <property type="match status" value="1"/>
</dbReference>
<dbReference type="HAMAP" id="MF_01523">
    <property type="entry name" value="16SrRNA_methyltr_J"/>
    <property type="match status" value="1"/>
</dbReference>
<dbReference type="InterPro" id="IPR007536">
    <property type="entry name" value="16SrRNA_methylTrfase_J"/>
</dbReference>
<dbReference type="InterPro" id="IPR029063">
    <property type="entry name" value="SAM-dependent_MTases_sf"/>
</dbReference>
<dbReference type="PANTHER" id="PTHR36112">
    <property type="entry name" value="RIBOSOMAL RNA SMALL SUBUNIT METHYLTRANSFERASE J"/>
    <property type="match status" value="1"/>
</dbReference>
<dbReference type="PANTHER" id="PTHR36112:SF1">
    <property type="entry name" value="RIBOSOMAL RNA SMALL SUBUNIT METHYLTRANSFERASE J"/>
    <property type="match status" value="1"/>
</dbReference>
<dbReference type="Pfam" id="PF04445">
    <property type="entry name" value="SAM_MT"/>
    <property type="match status" value="1"/>
</dbReference>
<dbReference type="SUPFAM" id="SSF53335">
    <property type="entry name" value="S-adenosyl-L-methionine-dependent methyltransferases"/>
    <property type="match status" value="1"/>
</dbReference>
<feature type="chain" id="PRO_0000212076" description="Ribosomal RNA small subunit methyltransferase J">
    <location>
        <begin position="1"/>
        <end position="250"/>
    </location>
</feature>
<feature type="binding site" evidence="1">
    <location>
        <begin position="96"/>
        <end position="97"/>
    </location>
    <ligand>
        <name>S-adenosyl-L-methionine</name>
        <dbReference type="ChEBI" id="CHEBI:59789"/>
    </ligand>
</feature>
<feature type="binding site" evidence="1">
    <location>
        <position position="168"/>
    </location>
    <ligand>
        <name>S-adenosyl-L-methionine</name>
        <dbReference type="ChEBI" id="CHEBI:59789"/>
    </ligand>
</feature>
<proteinExistence type="inferred from homology"/>
<reference key="1">
    <citation type="submission" date="2003-03" db="EMBL/GenBank/DDBJ databases">
        <title>The complete genome sequence of Neisseria gonorrhoeae.</title>
        <authorList>
            <person name="Lewis L.A."/>
            <person name="Gillaspy A.F."/>
            <person name="McLaughlin R.E."/>
            <person name="Gipson M."/>
            <person name="Ducey T.F."/>
            <person name="Ownbey T."/>
            <person name="Hartman K."/>
            <person name="Nydick C."/>
            <person name="Carson M.B."/>
            <person name="Vaughn J."/>
            <person name="Thomson C."/>
            <person name="Song L."/>
            <person name="Lin S."/>
            <person name="Yuan X."/>
            <person name="Najar F."/>
            <person name="Zhan M."/>
            <person name="Ren Q."/>
            <person name="Zhu H."/>
            <person name="Qi S."/>
            <person name="Kenton S.M."/>
            <person name="Lai H."/>
            <person name="White J.D."/>
            <person name="Clifton S."/>
            <person name="Roe B.A."/>
            <person name="Dyer D.W."/>
        </authorList>
    </citation>
    <scope>NUCLEOTIDE SEQUENCE [LARGE SCALE GENOMIC DNA]</scope>
    <source>
        <strain>ATCC 700825 / FA 1090</strain>
    </source>
</reference>